<gene>
    <name type="primary">bnrdE</name>
</gene>
<reference key="1">
    <citation type="journal article" date="1998" name="Proc. Natl. Acad. Sci. U.S.A.">
        <title>Introns and intein coding sequence in the ribonucleotide reductase genes of Bacillus subtilis temperate bacteriophage SPbeta.</title>
        <authorList>
            <person name="Lazarevic V."/>
            <person name="Soldo B."/>
            <person name="Duesterhoeft A."/>
            <person name="Hilbert H."/>
            <person name="Maueel C."/>
            <person name="Karamata D."/>
        </authorList>
    </citation>
    <scope>NUCLEOTIDE SEQUENCE [GENOMIC DNA / MRNA]</scope>
</reference>
<organismHost>
    <name type="scientific">Bacillus pumilus</name>
    <name type="common">Bacillus mesentericus</name>
    <dbReference type="NCBI Taxonomy" id="1408"/>
</organismHost>
<organismHost>
    <name type="scientific">Bacillus subtilis</name>
    <dbReference type="NCBI Taxonomy" id="1423"/>
</organismHost>
<protein>
    <recommendedName>
        <fullName>Ribonucleoside-diphosphate reductase nrdEB subunit alpha</fullName>
        <ecNumber>1.17.4.1</ecNumber>
    </recommendedName>
    <alternativeName>
        <fullName>Ribonucleotide reductase large subunit</fullName>
    </alternativeName>
    <component>
        <recommendedName>
            <fullName>SPBc2 bnrdE intein</fullName>
        </recommendedName>
    </component>
</protein>
<organism>
    <name type="scientific">Bacillus phage SPbeta</name>
    <name type="common">Bacillus phage SPBc2</name>
    <name type="synonym">Bacteriophage SP-beta</name>
    <dbReference type="NCBI Taxonomy" id="2932878"/>
    <lineage>
        <taxon>Viruses</taxon>
        <taxon>Duplodnaviria</taxon>
        <taxon>Heunggongvirae</taxon>
        <taxon>Uroviricota</taxon>
        <taxon>Caudoviricetes</taxon>
        <taxon>Spbetavirus</taxon>
        <taxon>Spbetavirus SPbeta</taxon>
    </lineage>
</organism>
<dbReference type="EC" id="1.17.4.1"/>
<dbReference type="EMBL" id="AF020713">
    <property type="protein sequence ID" value="AAC13134.1"/>
    <property type="molecule type" value="Genomic_DNA"/>
</dbReference>
<dbReference type="PIR" id="T12925">
    <property type="entry name" value="T12925"/>
</dbReference>
<dbReference type="RefSeq" id="NP_046713.1">
    <property type="nucleotide sequence ID" value="NC_001884.1"/>
</dbReference>
<dbReference type="SMR" id="O64173"/>
<dbReference type="GeneID" id="1261459"/>
<dbReference type="KEGG" id="vg:1261459"/>
<dbReference type="Proteomes" id="UP000009091">
    <property type="component" value="Genome"/>
</dbReference>
<dbReference type="GO" id="GO:0005524">
    <property type="term" value="F:ATP binding"/>
    <property type="evidence" value="ECO:0007669"/>
    <property type="project" value="UniProtKB-KW"/>
</dbReference>
<dbReference type="GO" id="GO:0004519">
    <property type="term" value="F:endonuclease activity"/>
    <property type="evidence" value="ECO:0007669"/>
    <property type="project" value="InterPro"/>
</dbReference>
<dbReference type="GO" id="GO:0004748">
    <property type="term" value="F:ribonucleoside-diphosphate reductase activity, thioredoxin disulfide as acceptor"/>
    <property type="evidence" value="ECO:0007669"/>
    <property type="project" value="UniProtKB-EC"/>
</dbReference>
<dbReference type="GO" id="GO:0009263">
    <property type="term" value="P:deoxyribonucleotide biosynthetic process"/>
    <property type="evidence" value="ECO:0007669"/>
    <property type="project" value="UniProtKB-KW"/>
</dbReference>
<dbReference type="GO" id="GO:0016539">
    <property type="term" value="P:intein-mediated protein splicing"/>
    <property type="evidence" value="ECO:0007669"/>
    <property type="project" value="InterPro"/>
</dbReference>
<dbReference type="CDD" id="cd00081">
    <property type="entry name" value="Hint"/>
    <property type="match status" value="1"/>
</dbReference>
<dbReference type="Gene3D" id="3.20.70.20">
    <property type="match status" value="2"/>
</dbReference>
<dbReference type="Gene3D" id="2.170.16.10">
    <property type="entry name" value="Hedgehog/Intein (Hint) domain"/>
    <property type="match status" value="1"/>
</dbReference>
<dbReference type="Gene3D" id="3.10.28.10">
    <property type="entry name" value="Homing endonucleases"/>
    <property type="match status" value="1"/>
</dbReference>
<dbReference type="InterPro" id="IPR003586">
    <property type="entry name" value="Hint_dom_C"/>
</dbReference>
<dbReference type="InterPro" id="IPR003587">
    <property type="entry name" value="Hint_dom_N"/>
</dbReference>
<dbReference type="InterPro" id="IPR036844">
    <property type="entry name" value="Hint_dom_sf"/>
</dbReference>
<dbReference type="InterPro" id="IPR027434">
    <property type="entry name" value="Homing_endonucl"/>
</dbReference>
<dbReference type="InterPro" id="IPR006142">
    <property type="entry name" value="INTEIN"/>
</dbReference>
<dbReference type="InterPro" id="IPR030934">
    <property type="entry name" value="Intein_C"/>
</dbReference>
<dbReference type="InterPro" id="IPR004042">
    <property type="entry name" value="Intein_endonuc_central"/>
</dbReference>
<dbReference type="InterPro" id="IPR006141">
    <property type="entry name" value="Intein_N"/>
</dbReference>
<dbReference type="InterPro" id="IPR004860">
    <property type="entry name" value="LAGLIDADG_dom"/>
</dbReference>
<dbReference type="InterPro" id="IPR013346">
    <property type="entry name" value="NrdE_NrdA_C"/>
</dbReference>
<dbReference type="InterPro" id="IPR000788">
    <property type="entry name" value="RNR_lg_C"/>
</dbReference>
<dbReference type="InterPro" id="IPR013509">
    <property type="entry name" value="RNR_lsu_N"/>
</dbReference>
<dbReference type="InterPro" id="IPR013554">
    <property type="entry name" value="RNR_N"/>
</dbReference>
<dbReference type="InterPro" id="IPR008926">
    <property type="entry name" value="RNR_R1-su_N"/>
</dbReference>
<dbReference type="InterPro" id="IPR039718">
    <property type="entry name" value="Rrm1"/>
</dbReference>
<dbReference type="NCBIfam" id="TIGR01443">
    <property type="entry name" value="intein_Cterm"/>
    <property type="match status" value="1"/>
</dbReference>
<dbReference type="NCBIfam" id="TIGR01445">
    <property type="entry name" value="intein_Nterm"/>
    <property type="match status" value="1"/>
</dbReference>
<dbReference type="PANTHER" id="PTHR11573:SF30">
    <property type="entry name" value="RIBONUCLEOSIDE-DIPHOSPHATE REDUCTASE 2 SUBUNIT ALPHA"/>
    <property type="match status" value="1"/>
</dbReference>
<dbReference type="PANTHER" id="PTHR11573">
    <property type="entry name" value="RIBONUCLEOSIDE-DIPHOSPHATE REDUCTASE LARGE CHAIN"/>
    <property type="match status" value="1"/>
</dbReference>
<dbReference type="Pfam" id="PF14890">
    <property type="entry name" value="Intein_splicing"/>
    <property type="match status" value="1"/>
</dbReference>
<dbReference type="Pfam" id="PF14528">
    <property type="entry name" value="LAGLIDADG_3"/>
    <property type="match status" value="1"/>
</dbReference>
<dbReference type="Pfam" id="PF02867">
    <property type="entry name" value="Ribonuc_red_lgC"/>
    <property type="match status" value="1"/>
</dbReference>
<dbReference type="Pfam" id="PF00317">
    <property type="entry name" value="Ribonuc_red_lgN"/>
    <property type="match status" value="1"/>
</dbReference>
<dbReference type="Pfam" id="PF08343">
    <property type="entry name" value="RNR_N"/>
    <property type="match status" value="1"/>
</dbReference>
<dbReference type="PRINTS" id="PR00379">
    <property type="entry name" value="INTEIN"/>
</dbReference>
<dbReference type="SMART" id="SM00305">
    <property type="entry name" value="HintC"/>
    <property type="match status" value="1"/>
</dbReference>
<dbReference type="SMART" id="SM00306">
    <property type="entry name" value="HintN"/>
    <property type="match status" value="1"/>
</dbReference>
<dbReference type="SUPFAM" id="SSF51294">
    <property type="entry name" value="Hedgehog/intein (Hint) domain"/>
    <property type="match status" value="1"/>
</dbReference>
<dbReference type="SUPFAM" id="SSF55608">
    <property type="entry name" value="Homing endonucleases"/>
    <property type="match status" value="1"/>
</dbReference>
<dbReference type="SUPFAM" id="SSF51998">
    <property type="entry name" value="PFL-like glycyl radical enzymes"/>
    <property type="match status" value="1"/>
</dbReference>
<dbReference type="SUPFAM" id="SSF48168">
    <property type="entry name" value="R1 subunit of ribonucleotide reductase, N-terminal domain"/>
    <property type="match status" value="1"/>
</dbReference>
<dbReference type="PROSITE" id="PS50818">
    <property type="entry name" value="INTEIN_C_TER"/>
    <property type="match status" value="1"/>
</dbReference>
<dbReference type="PROSITE" id="PS50819">
    <property type="entry name" value="INTEIN_ENDONUCLEASE"/>
    <property type="match status" value="1"/>
</dbReference>
<dbReference type="PROSITE" id="PS50817">
    <property type="entry name" value="INTEIN_N_TER"/>
    <property type="match status" value="1"/>
</dbReference>
<dbReference type="PROSITE" id="PS00089">
    <property type="entry name" value="RIBORED_LARGE"/>
    <property type="match status" value="1"/>
</dbReference>
<evidence type="ECO:0000250" key="1"/>
<evidence type="ECO:0000255" key="2">
    <source>
        <dbReference type="PROSITE-ProRule" id="PRU00273"/>
    </source>
</evidence>
<evidence type="ECO:0000305" key="3"/>
<accession>O64173</accession>
<sequence length="1084" mass="124621">MTNTIPNWIKLNNEIMIQKDGKYQFEKDKEAVHSYFVDYINQNTVFFHDLKEKLDYLIKNDYYEEEFLSKYTFEQIKSIYKIAYSYKFRFPSFMSAFKFYNDYALKTNDKTKILERYEDRVSIVALYCADGDYEKAVEEVHTMMKQEYQPATPTFLNAGRKRRGEMVSCFLLEVGDSLNDISRAIDISMQLSKLGGGVALNLNKLRAKGEAIKDVENATKGVVGVMKLLDNAFRYADQMGQRQGSGAVYLSVFHPDITDFLDTKKISADEDVRVKTLSIGVVVPDKFIELAREDKDYYMFYPHSVYKEYGQYLDELDINEMYDELVENPRVRKAKGNARKLLEQLAILRSESGYPYIMFADNVNKVHPNEHISKVKFSNLCVTGETLLLTENGYEKAADLYKKQNDLKVVIDNRTKDFAVGSKGTTIVDAIPMQLTKKDAEIFKVKTKQGYEIRATEWHKFYVKRDGEIQKLQLNQLKTGDKLLVQSAEGAYGKIHEPDLAYIMGIIAGDGTITEKTAKIYLYDNKKVLEQKVTDAVHRIIQKHKVDRAYKHNTSLLPTFNMANPEKQDLLYMNSTVLFDILKKFGMNKETKTRVPEFIFQANKETQAAYLSGLFQTDGCVNANHKAKALTIELTSIHYESLQDVQKLLLNMGVYTTIYSNNKRSQELLPDGKGGSKLYNVKPTHKISIQDRNSRELFMSIVEMKEYDVYKFNLLTETLQPKSRKPKHDFTAEIISIEEDGVEDVYDTTQEDYHSLIFNGIVTGNCSEVLQSSQVSVYTDYDKEDEIGLDISCNLGSMNIVNVMSNQSIASTVRIAIDSLTTVTRKTNIVNAPAVARANTLMRSIGLGQMNLHGFLAQNNIAYESEEAKDFANTYFMMVNFYSLQRSMEIARETGETYYKFDGSTYKSGEYFEKYVTNDYSPQYEKVKKLFGDQHIPNIQDWMKLKEDVMKYGLYHSYRQAIAPTGSISYVQSSTAGVMPIMERIEERTYGNSKTYYPMPGLSAQNWFFYKEAYDMDMFKVVDLIATIQQHVDQGISFTLFLKDTMTTRDLNRIDLYAHHRGIKTLYYARTKDTTQEGCLSCVV</sequence>
<keyword id="KW-0021">Allosteric enzyme</keyword>
<keyword id="KW-0067">ATP-binding</keyword>
<keyword id="KW-0068">Autocatalytic cleavage</keyword>
<keyword id="KW-0215">Deoxyribonucleotide synthesis</keyword>
<keyword id="KW-1015">Disulfide bond</keyword>
<keyword id="KW-0547">Nucleotide-binding</keyword>
<keyword id="KW-0560">Oxidoreductase</keyword>
<keyword id="KW-0651">Protein splicing</keyword>
<keyword id="KW-1185">Reference proteome</keyword>
<proteinExistence type="inferred from homology"/>
<comment type="function">
    <text evidence="1">Provides the precursors necessary for DNA synthesis. Catalyzes the biosynthesis of deoxyribonucleotides from the corresponding ribonucleotides (By similarity).</text>
</comment>
<comment type="catalytic activity">
    <reaction>
        <text>a 2'-deoxyribonucleoside 5'-diphosphate + [thioredoxin]-disulfide + H2O = a ribonucleoside 5'-diphosphate + [thioredoxin]-dithiol</text>
        <dbReference type="Rhea" id="RHEA:23252"/>
        <dbReference type="Rhea" id="RHEA-COMP:10698"/>
        <dbReference type="Rhea" id="RHEA-COMP:10700"/>
        <dbReference type="ChEBI" id="CHEBI:15377"/>
        <dbReference type="ChEBI" id="CHEBI:29950"/>
        <dbReference type="ChEBI" id="CHEBI:50058"/>
        <dbReference type="ChEBI" id="CHEBI:57930"/>
        <dbReference type="ChEBI" id="CHEBI:73316"/>
        <dbReference type="EC" id="1.17.4.1"/>
    </reaction>
</comment>
<comment type="activity regulation">
    <text evidence="1">Under complex allosteric control mediated by deoxynucleoside triphosphates and ATP binding. The type of nucleotide bound at the specificity site determines substrate preference. It seems probable that ATP makes the enzyme reduce CDP and UDP, dGTP favors ADP reduction and dTTP favors GDP reduction (By similarity).</text>
</comment>
<comment type="subunit">
    <text evidence="1">Tetramer of two alpha and two beta subunits.</text>
</comment>
<comment type="PTM">
    <text evidence="3">This protein undergoes a protein self splicing that involves a post-translational excision of the intervening region (intein) followed by peptide ligation.</text>
</comment>
<comment type="similarity">
    <text evidence="3">Belongs to the ribonucleoside diphosphate reductase large chain family.</text>
</comment>
<name>NRDEB_BPSPB</name>
<feature type="chain" id="PRO_0000377533" description="Ribonucleoside-diphosphate reductase nrdEB subunit alpha, 1st part">
    <location>
        <begin position="1"/>
        <end position="380"/>
    </location>
</feature>
<feature type="chain" id="PRO_0000377534" description="SPBc2 bnrdE intein">
    <location>
        <begin position="381"/>
        <end position="765"/>
    </location>
</feature>
<feature type="chain" id="PRO_0000377535" description="Ribonucleoside-diphosphate reductase nrdEB subunit alpha, 2nd part">
    <location>
        <begin position="766"/>
        <end position="1084"/>
    </location>
</feature>
<feature type="domain" description="DOD-type homing endonuclease" evidence="2">
    <location>
        <begin position="503"/>
        <end position="654"/>
    </location>
</feature>
<feature type="active site" description="Proton acceptor" evidence="1">
    <location>
        <position position="379"/>
    </location>
</feature>
<feature type="active site" description="Cysteine radical intermediate" evidence="1">
    <location>
        <position position="381"/>
    </location>
</feature>
<feature type="active site" description="Proton acceptor" evidence="1">
    <location>
        <position position="768"/>
    </location>
</feature>
<feature type="binding site" evidence="1">
    <location>
        <position position="152"/>
    </location>
    <ligand>
        <name>substrate</name>
    </ligand>
</feature>
<feature type="binding site" evidence="1">
    <location>
        <begin position="168"/>
        <end position="169"/>
    </location>
    <ligand>
        <name>substrate</name>
    </ligand>
</feature>
<feature type="binding site" evidence="1">
    <location>
        <position position="197"/>
    </location>
    <ligand>
        <name>substrate</name>
    </ligand>
</feature>
<feature type="binding site" evidence="1">
    <location>
        <begin position="964"/>
        <end position="968"/>
    </location>
    <ligand>
        <name>substrate</name>
    </ligand>
</feature>
<feature type="site" description="Important for hydrogen atom transfer" evidence="1">
    <location>
        <position position="169"/>
    </location>
</feature>
<feature type="site" description="Allosteric effector binding" evidence="1">
    <location>
        <position position="176"/>
    </location>
</feature>
<feature type="site" description="Allosteric effector binding" evidence="1">
    <location>
        <position position="206"/>
    </location>
</feature>
<feature type="site" description="Important for hydrogen atom transfer" evidence="1">
    <location>
        <position position="793"/>
    </location>
</feature>
<feature type="site" description="Important for electron transfer" evidence="1">
    <location>
        <position position="1067"/>
    </location>
</feature>
<feature type="site" description="Important for electron transfer" evidence="1">
    <location>
        <position position="1068"/>
    </location>
</feature>
<feature type="site" description="Interacts with thioredoxin/glutaredoxin" evidence="1">
    <location>
        <position position="1079"/>
    </location>
</feature>
<feature type="site" description="Interacts with thioredoxin/glutaredoxin" evidence="1">
    <location>
        <position position="1082"/>
    </location>
</feature>
<feature type="disulfide bond" description="Redox-active" evidence="1">
    <location>
        <begin position="169"/>
        <end position="793"/>
    </location>
</feature>